<evidence type="ECO:0000255" key="1">
    <source>
        <dbReference type="HAMAP-Rule" id="MF_00086"/>
    </source>
</evidence>
<dbReference type="EC" id="2.5.1.6" evidence="1"/>
<dbReference type="EMBL" id="CP001095">
    <property type="protein sequence ID" value="ACJ53197.1"/>
    <property type="molecule type" value="Genomic_DNA"/>
</dbReference>
<dbReference type="EMBL" id="AP010889">
    <property type="protein sequence ID" value="BAJ69790.1"/>
    <property type="molecule type" value="Genomic_DNA"/>
</dbReference>
<dbReference type="RefSeq" id="WP_012578401.1">
    <property type="nucleotide sequence ID" value="NC_011593.1"/>
</dbReference>
<dbReference type="SMR" id="B7GUQ1"/>
<dbReference type="KEGG" id="bln:Blon_2136"/>
<dbReference type="KEGG" id="blon:BLIJ_2213"/>
<dbReference type="PATRIC" id="fig|391904.8.peg.2215"/>
<dbReference type="HOGENOM" id="CLU_041802_1_1_11"/>
<dbReference type="UniPathway" id="UPA00315">
    <property type="reaction ID" value="UER00080"/>
</dbReference>
<dbReference type="Proteomes" id="UP000001360">
    <property type="component" value="Chromosome"/>
</dbReference>
<dbReference type="GO" id="GO:0005737">
    <property type="term" value="C:cytoplasm"/>
    <property type="evidence" value="ECO:0007669"/>
    <property type="project" value="UniProtKB-SubCell"/>
</dbReference>
<dbReference type="GO" id="GO:0005524">
    <property type="term" value="F:ATP binding"/>
    <property type="evidence" value="ECO:0007669"/>
    <property type="project" value="UniProtKB-UniRule"/>
</dbReference>
<dbReference type="GO" id="GO:0000287">
    <property type="term" value="F:magnesium ion binding"/>
    <property type="evidence" value="ECO:0007669"/>
    <property type="project" value="UniProtKB-UniRule"/>
</dbReference>
<dbReference type="GO" id="GO:0004478">
    <property type="term" value="F:methionine adenosyltransferase activity"/>
    <property type="evidence" value="ECO:0007669"/>
    <property type="project" value="UniProtKB-UniRule"/>
</dbReference>
<dbReference type="GO" id="GO:0006730">
    <property type="term" value="P:one-carbon metabolic process"/>
    <property type="evidence" value="ECO:0007669"/>
    <property type="project" value="UniProtKB-KW"/>
</dbReference>
<dbReference type="GO" id="GO:0006556">
    <property type="term" value="P:S-adenosylmethionine biosynthetic process"/>
    <property type="evidence" value="ECO:0007669"/>
    <property type="project" value="UniProtKB-UniRule"/>
</dbReference>
<dbReference type="CDD" id="cd18079">
    <property type="entry name" value="S-AdoMet_synt"/>
    <property type="match status" value="1"/>
</dbReference>
<dbReference type="FunFam" id="3.30.300.10:FF:000003">
    <property type="entry name" value="S-adenosylmethionine synthase"/>
    <property type="match status" value="1"/>
</dbReference>
<dbReference type="FunFam" id="3.30.300.10:FF:000004">
    <property type="entry name" value="S-adenosylmethionine synthase"/>
    <property type="match status" value="1"/>
</dbReference>
<dbReference type="Gene3D" id="3.30.300.10">
    <property type="match status" value="3"/>
</dbReference>
<dbReference type="HAMAP" id="MF_00086">
    <property type="entry name" value="S_AdoMet_synth1"/>
    <property type="match status" value="1"/>
</dbReference>
<dbReference type="InterPro" id="IPR022631">
    <property type="entry name" value="ADOMET_SYNTHASE_CS"/>
</dbReference>
<dbReference type="InterPro" id="IPR022630">
    <property type="entry name" value="S-AdoMet_synt_C"/>
</dbReference>
<dbReference type="InterPro" id="IPR022629">
    <property type="entry name" value="S-AdoMet_synt_central"/>
</dbReference>
<dbReference type="InterPro" id="IPR022628">
    <property type="entry name" value="S-AdoMet_synt_N"/>
</dbReference>
<dbReference type="InterPro" id="IPR002133">
    <property type="entry name" value="S-AdoMet_synthetase"/>
</dbReference>
<dbReference type="InterPro" id="IPR022636">
    <property type="entry name" value="S-AdoMet_synthetase_sfam"/>
</dbReference>
<dbReference type="NCBIfam" id="TIGR01034">
    <property type="entry name" value="metK"/>
    <property type="match status" value="1"/>
</dbReference>
<dbReference type="PANTHER" id="PTHR11964">
    <property type="entry name" value="S-ADENOSYLMETHIONINE SYNTHETASE"/>
    <property type="match status" value="1"/>
</dbReference>
<dbReference type="Pfam" id="PF02773">
    <property type="entry name" value="S-AdoMet_synt_C"/>
    <property type="match status" value="1"/>
</dbReference>
<dbReference type="Pfam" id="PF02772">
    <property type="entry name" value="S-AdoMet_synt_M"/>
    <property type="match status" value="1"/>
</dbReference>
<dbReference type="Pfam" id="PF00438">
    <property type="entry name" value="S-AdoMet_synt_N"/>
    <property type="match status" value="1"/>
</dbReference>
<dbReference type="PIRSF" id="PIRSF000497">
    <property type="entry name" value="MAT"/>
    <property type="match status" value="1"/>
</dbReference>
<dbReference type="SUPFAM" id="SSF55973">
    <property type="entry name" value="S-adenosylmethionine synthetase"/>
    <property type="match status" value="3"/>
</dbReference>
<dbReference type="PROSITE" id="PS00376">
    <property type="entry name" value="ADOMET_SYNTHASE_1"/>
    <property type="match status" value="1"/>
</dbReference>
<dbReference type="PROSITE" id="PS00377">
    <property type="entry name" value="ADOMET_SYNTHASE_2"/>
    <property type="match status" value="1"/>
</dbReference>
<feature type="chain" id="PRO_1000196691" description="S-adenosylmethionine synthase">
    <location>
        <begin position="1"/>
        <end position="406"/>
    </location>
</feature>
<feature type="region of interest" description="Flexible loop" evidence="1">
    <location>
        <begin position="101"/>
        <end position="111"/>
    </location>
</feature>
<feature type="binding site" description="in other chain" evidence="1">
    <location>
        <position position="17"/>
    </location>
    <ligand>
        <name>ATP</name>
        <dbReference type="ChEBI" id="CHEBI:30616"/>
        <note>ligand shared between two neighboring subunits</note>
    </ligand>
</feature>
<feature type="binding site" evidence="1">
    <location>
        <position position="19"/>
    </location>
    <ligand>
        <name>Mg(2+)</name>
        <dbReference type="ChEBI" id="CHEBI:18420"/>
    </ligand>
</feature>
<feature type="binding site" evidence="1">
    <location>
        <position position="45"/>
    </location>
    <ligand>
        <name>K(+)</name>
        <dbReference type="ChEBI" id="CHEBI:29103"/>
    </ligand>
</feature>
<feature type="binding site" description="in other chain" evidence="1">
    <location>
        <position position="58"/>
    </location>
    <ligand>
        <name>L-methionine</name>
        <dbReference type="ChEBI" id="CHEBI:57844"/>
        <note>ligand shared between two neighboring subunits</note>
    </ligand>
</feature>
<feature type="binding site" description="in other chain" evidence="1">
    <location>
        <position position="101"/>
    </location>
    <ligand>
        <name>L-methionine</name>
        <dbReference type="ChEBI" id="CHEBI:57844"/>
        <note>ligand shared between two neighboring subunits</note>
    </ligand>
</feature>
<feature type="binding site" description="in other chain" evidence="1">
    <location>
        <begin position="178"/>
        <end position="180"/>
    </location>
    <ligand>
        <name>ATP</name>
        <dbReference type="ChEBI" id="CHEBI:30616"/>
        <note>ligand shared between two neighboring subunits</note>
    </ligand>
</feature>
<feature type="binding site" evidence="1">
    <location>
        <position position="258"/>
    </location>
    <ligand>
        <name>ATP</name>
        <dbReference type="ChEBI" id="CHEBI:30616"/>
        <note>ligand shared between two neighboring subunits</note>
    </ligand>
</feature>
<feature type="binding site" evidence="1">
    <location>
        <position position="258"/>
    </location>
    <ligand>
        <name>L-methionine</name>
        <dbReference type="ChEBI" id="CHEBI:57844"/>
        <note>ligand shared between two neighboring subunits</note>
    </ligand>
</feature>
<feature type="binding site" description="in other chain" evidence="1">
    <location>
        <begin position="264"/>
        <end position="265"/>
    </location>
    <ligand>
        <name>ATP</name>
        <dbReference type="ChEBI" id="CHEBI:30616"/>
        <note>ligand shared between two neighboring subunits</note>
    </ligand>
</feature>
<feature type="binding site" evidence="1">
    <location>
        <position position="281"/>
    </location>
    <ligand>
        <name>ATP</name>
        <dbReference type="ChEBI" id="CHEBI:30616"/>
        <note>ligand shared between two neighboring subunits</note>
    </ligand>
</feature>
<feature type="binding site" evidence="1">
    <location>
        <position position="285"/>
    </location>
    <ligand>
        <name>ATP</name>
        <dbReference type="ChEBI" id="CHEBI:30616"/>
        <note>ligand shared between two neighboring subunits</note>
    </ligand>
</feature>
<feature type="binding site" description="in other chain" evidence="1">
    <location>
        <position position="289"/>
    </location>
    <ligand>
        <name>L-methionine</name>
        <dbReference type="ChEBI" id="CHEBI:57844"/>
        <note>ligand shared between two neighboring subunits</note>
    </ligand>
</feature>
<protein>
    <recommendedName>
        <fullName evidence="1">S-adenosylmethionine synthase</fullName>
        <shortName evidence="1">AdoMet synthase</shortName>
        <ecNumber evidence="1">2.5.1.6</ecNumber>
    </recommendedName>
    <alternativeName>
        <fullName evidence="1">MAT</fullName>
    </alternativeName>
    <alternativeName>
        <fullName evidence="1">Methionine adenosyltransferase</fullName>
    </alternativeName>
</protein>
<name>METK_BIFLS</name>
<proteinExistence type="inferred from homology"/>
<organism>
    <name type="scientific">Bifidobacterium longum subsp. infantis (strain ATCC 15697 / DSM 20088 / JCM 1222 / NCTC 11817 / S12)</name>
    <dbReference type="NCBI Taxonomy" id="391904"/>
    <lineage>
        <taxon>Bacteria</taxon>
        <taxon>Bacillati</taxon>
        <taxon>Actinomycetota</taxon>
        <taxon>Actinomycetes</taxon>
        <taxon>Bifidobacteriales</taxon>
        <taxon>Bifidobacteriaceae</taxon>
        <taxon>Bifidobacterium</taxon>
    </lineage>
</organism>
<comment type="function">
    <text evidence="1">Catalyzes the formation of S-adenosylmethionine (AdoMet) from methionine and ATP. The overall synthetic reaction is composed of two sequential steps, AdoMet formation and the subsequent tripolyphosphate hydrolysis which occurs prior to release of AdoMet from the enzyme.</text>
</comment>
<comment type="catalytic activity">
    <reaction evidence="1">
        <text>L-methionine + ATP + H2O = S-adenosyl-L-methionine + phosphate + diphosphate</text>
        <dbReference type="Rhea" id="RHEA:21080"/>
        <dbReference type="ChEBI" id="CHEBI:15377"/>
        <dbReference type="ChEBI" id="CHEBI:30616"/>
        <dbReference type="ChEBI" id="CHEBI:33019"/>
        <dbReference type="ChEBI" id="CHEBI:43474"/>
        <dbReference type="ChEBI" id="CHEBI:57844"/>
        <dbReference type="ChEBI" id="CHEBI:59789"/>
        <dbReference type="EC" id="2.5.1.6"/>
    </reaction>
</comment>
<comment type="cofactor">
    <cofactor evidence="1">
        <name>Mg(2+)</name>
        <dbReference type="ChEBI" id="CHEBI:18420"/>
    </cofactor>
    <text evidence="1">Binds 2 divalent ions per subunit.</text>
</comment>
<comment type="cofactor">
    <cofactor evidence="1">
        <name>K(+)</name>
        <dbReference type="ChEBI" id="CHEBI:29103"/>
    </cofactor>
    <text evidence="1">Binds 1 potassium ion per subunit.</text>
</comment>
<comment type="pathway">
    <text evidence="1">Amino-acid biosynthesis; S-adenosyl-L-methionine biosynthesis; S-adenosyl-L-methionine from L-methionine: step 1/1.</text>
</comment>
<comment type="subunit">
    <text evidence="1">Homotetramer; dimer of dimers.</text>
</comment>
<comment type="subcellular location">
    <subcellularLocation>
        <location evidence="1">Cytoplasm</location>
    </subcellularLocation>
</comment>
<comment type="similarity">
    <text evidence="1">Belongs to the AdoMet synthase family.</text>
</comment>
<sequence length="406" mass="43830">MTEEHRLISAESVTEGHPDKVCDQISDAILDDLLVQDPSSHVAVETSAATGVFLVFGEVTSKGYCDVQSKVRETLRNIGYTSSEVGLDADSCGVVVAITEQSAEINQGVARLTGDQETAASREERYEAQGAGDQGVMFGYATDETPTLMPLPIYLAHRLAFRLTEVRKSGEVPHLRPDGKTQVTIEYDDNDKPVRLDTVLISTQHDPEVTQDWLAVELKKHVIDPVLDEVLGSKVPHDNYRQLVNPTGSFILGGPAADAGLTGRKIIVDTYGGAAHHGGGAFSGKDPSKVDRSAAYATRWVAKNIVAAGLAHKVEIQIAYAIGVADPVSVNVETFGTEQGVTRGQIAAAVRKVFDLRPAAIIDELDLKRPIYLKTAAYGHFGRTDVEFPWEKTDKVEELKAAIAAE</sequence>
<accession>B7GUQ1</accession>
<accession>E8MMY7</accession>
<keyword id="KW-0067">ATP-binding</keyword>
<keyword id="KW-0963">Cytoplasm</keyword>
<keyword id="KW-0460">Magnesium</keyword>
<keyword id="KW-0479">Metal-binding</keyword>
<keyword id="KW-0547">Nucleotide-binding</keyword>
<keyword id="KW-0554">One-carbon metabolism</keyword>
<keyword id="KW-0630">Potassium</keyword>
<keyword id="KW-0808">Transferase</keyword>
<gene>
    <name evidence="1" type="primary">metK</name>
    <name type="ordered locus">Blon_2136</name>
    <name type="ordered locus">BLIJ_2213</name>
</gene>
<reference key="1">
    <citation type="journal article" date="2008" name="Proc. Natl. Acad. Sci. U.S.A.">
        <title>The genome sequence of Bifidobacterium longum subsp. infantis reveals adaptations for milk utilization within the infant microbiome.</title>
        <authorList>
            <person name="Sela D.A."/>
            <person name="Chapman J."/>
            <person name="Adeuya A."/>
            <person name="Kim J.H."/>
            <person name="Chen F."/>
            <person name="Whitehead T.R."/>
            <person name="Lapidus A."/>
            <person name="Rokhsar D.S."/>
            <person name="Lebrilla C.B."/>
            <person name="German J.B."/>
            <person name="Price N.P."/>
            <person name="Richardson P.M."/>
            <person name="Mills D.A."/>
        </authorList>
    </citation>
    <scope>NUCLEOTIDE SEQUENCE [LARGE SCALE GENOMIC DNA]</scope>
    <source>
        <strain>ATCC 15697 / DSM 20088 / JCM 1222 / NCTC 11817 / S12</strain>
    </source>
</reference>
<reference key="2">
    <citation type="journal article" date="2011" name="Nature">
        <title>Bifidobacteria can protect from enteropathogenic infection through production of acetate.</title>
        <authorList>
            <person name="Fukuda S."/>
            <person name="Toh H."/>
            <person name="Hase K."/>
            <person name="Oshima K."/>
            <person name="Nakanishi Y."/>
            <person name="Yoshimura K."/>
            <person name="Tobe T."/>
            <person name="Clarke J.M."/>
            <person name="Topping D.L."/>
            <person name="Suzuki T."/>
            <person name="Taylor T.D."/>
            <person name="Itoh K."/>
            <person name="Kikuchi J."/>
            <person name="Morita H."/>
            <person name="Hattori M."/>
            <person name="Ohno H."/>
        </authorList>
    </citation>
    <scope>NUCLEOTIDE SEQUENCE [LARGE SCALE GENOMIC DNA]</scope>
    <source>
        <strain>ATCC 15697 / DSM 20088 / JCM 1222 / NCTC 11817 / S12</strain>
    </source>
</reference>